<protein>
    <recommendedName>
        <fullName evidence="1">Pyridoxal 5'-phosphate synthase subunit PdxS</fullName>
        <shortName evidence="1">PLP synthase subunit PdxS</shortName>
        <ecNumber evidence="1">4.3.3.6</ecNumber>
    </recommendedName>
    <alternativeName>
        <fullName evidence="1">Pdx1</fullName>
    </alternativeName>
</protein>
<feature type="chain" id="PRO_0000109378" description="Pyridoxal 5'-phosphate synthase subunit PdxS">
    <location>
        <begin position="1"/>
        <end position="295"/>
    </location>
</feature>
<feature type="active site" description="Schiff-base intermediate with D-ribose 5-phosphate" evidence="1">
    <location>
        <position position="82"/>
    </location>
</feature>
<feature type="binding site" evidence="1">
    <location>
        <position position="25"/>
    </location>
    <ligand>
        <name>D-ribose 5-phosphate</name>
        <dbReference type="ChEBI" id="CHEBI:78346"/>
    </ligand>
</feature>
<feature type="binding site" evidence="1">
    <location>
        <position position="154"/>
    </location>
    <ligand>
        <name>D-ribose 5-phosphate</name>
        <dbReference type="ChEBI" id="CHEBI:78346"/>
    </ligand>
</feature>
<feature type="binding site" evidence="1">
    <location>
        <position position="166"/>
    </location>
    <ligand>
        <name>D-glyceraldehyde 3-phosphate</name>
        <dbReference type="ChEBI" id="CHEBI:59776"/>
    </ligand>
</feature>
<feature type="binding site" evidence="1">
    <location>
        <position position="215"/>
    </location>
    <ligand>
        <name>D-ribose 5-phosphate</name>
        <dbReference type="ChEBI" id="CHEBI:78346"/>
    </ligand>
</feature>
<feature type="binding site" evidence="1">
    <location>
        <begin position="236"/>
        <end position="237"/>
    </location>
    <ligand>
        <name>D-ribose 5-phosphate</name>
        <dbReference type="ChEBI" id="CHEBI:78346"/>
    </ligand>
</feature>
<sequence length="295" mass="31820">MTNVTGTERVKRGMAEMQKGGVIMDVVNAEQAKIAEEAGAVAVMALERVPADIRAAGGVSRMADPTIVEEVMGAVSIPVMAKCRIGHLVEARVLESLGVDYIDESEVLTPADEVYHLNKRDYTVPFVCGCRDIGEAARRIAEGASMLRTKGEPGTGNIVEAVRHMRQVNAEIRQVASLREDELMTYAKNTGAPYEVLLEIKRLGRLPVVNFAAGGVATPADAALMMQLGADGVFVGSGIFKSENPEKFARAIVEATTHYEDYELIASLSKGLGNAMKGVEISTLLPEQRMQERGW</sequence>
<keyword id="KW-0456">Lyase</keyword>
<keyword id="KW-0663">Pyridoxal phosphate</keyword>
<keyword id="KW-1185">Reference proteome</keyword>
<keyword id="KW-0704">Schiff base</keyword>
<organism>
    <name type="scientific">Bacillus cereus (strain ATCC 14579 / DSM 31 / CCUG 7414 / JCM 2152 / NBRC 15305 / NCIMB 9373 / NCTC 2599 / NRRL B-3711)</name>
    <dbReference type="NCBI Taxonomy" id="226900"/>
    <lineage>
        <taxon>Bacteria</taxon>
        <taxon>Bacillati</taxon>
        <taxon>Bacillota</taxon>
        <taxon>Bacilli</taxon>
        <taxon>Bacillales</taxon>
        <taxon>Bacillaceae</taxon>
        <taxon>Bacillus</taxon>
        <taxon>Bacillus cereus group</taxon>
    </lineage>
</organism>
<proteinExistence type="inferred from homology"/>
<dbReference type="EC" id="4.3.3.6" evidence="1"/>
<dbReference type="EMBL" id="AE016877">
    <property type="protein sequence ID" value="AAP07120.1"/>
    <property type="status" value="ALT_INIT"/>
    <property type="molecule type" value="Genomic_DNA"/>
</dbReference>
<dbReference type="RefSeq" id="NP_829919.1">
    <property type="nucleotide sequence ID" value="NC_004722.1"/>
</dbReference>
<dbReference type="RefSeq" id="WP_000186165.1">
    <property type="nucleotide sequence ID" value="NZ_CP138336.1"/>
</dbReference>
<dbReference type="SMR" id="Q81JC6"/>
<dbReference type="STRING" id="226900.BC_0015"/>
<dbReference type="MetOSite" id="Q81JC6"/>
<dbReference type="KEGG" id="bce:BC0015"/>
<dbReference type="PATRIC" id="fig|226900.8.peg.35"/>
<dbReference type="HOGENOM" id="CLU_055352_1_0_9"/>
<dbReference type="OrthoDB" id="9772545at2"/>
<dbReference type="UniPathway" id="UPA00245"/>
<dbReference type="Proteomes" id="UP000001417">
    <property type="component" value="Chromosome"/>
</dbReference>
<dbReference type="GO" id="GO:0016843">
    <property type="term" value="F:amine-lyase activity"/>
    <property type="evidence" value="ECO:0000318"/>
    <property type="project" value="GO_Central"/>
</dbReference>
<dbReference type="GO" id="GO:0036381">
    <property type="term" value="F:pyridoxal 5'-phosphate synthase (glutamine hydrolysing) activity"/>
    <property type="evidence" value="ECO:0007669"/>
    <property type="project" value="UniProtKB-UniRule"/>
</dbReference>
<dbReference type="GO" id="GO:0006520">
    <property type="term" value="P:amino acid metabolic process"/>
    <property type="evidence" value="ECO:0000318"/>
    <property type="project" value="GO_Central"/>
</dbReference>
<dbReference type="GO" id="GO:0042823">
    <property type="term" value="P:pyridoxal phosphate biosynthetic process"/>
    <property type="evidence" value="ECO:0000318"/>
    <property type="project" value="GO_Central"/>
</dbReference>
<dbReference type="GO" id="GO:0008615">
    <property type="term" value="P:pyridoxine biosynthetic process"/>
    <property type="evidence" value="ECO:0000318"/>
    <property type="project" value="GO_Central"/>
</dbReference>
<dbReference type="CDD" id="cd04727">
    <property type="entry name" value="pdxS"/>
    <property type="match status" value="1"/>
</dbReference>
<dbReference type="FunFam" id="3.20.20.70:FF:000001">
    <property type="entry name" value="Pyridoxine biosynthesis protein PDX1"/>
    <property type="match status" value="1"/>
</dbReference>
<dbReference type="Gene3D" id="3.20.20.70">
    <property type="entry name" value="Aldolase class I"/>
    <property type="match status" value="1"/>
</dbReference>
<dbReference type="HAMAP" id="MF_01824">
    <property type="entry name" value="PdxS"/>
    <property type="match status" value="1"/>
</dbReference>
<dbReference type="InterPro" id="IPR013785">
    <property type="entry name" value="Aldolase_TIM"/>
</dbReference>
<dbReference type="InterPro" id="IPR001852">
    <property type="entry name" value="PdxS/SNZ"/>
</dbReference>
<dbReference type="InterPro" id="IPR033755">
    <property type="entry name" value="PdxS/SNZ_N"/>
</dbReference>
<dbReference type="InterPro" id="IPR011060">
    <property type="entry name" value="RibuloseP-bd_barrel"/>
</dbReference>
<dbReference type="NCBIfam" id="NF003215">
    <property type="entry name" value="PRK04180.1"/>
    <property type="match status" value="1"/>
</dbReference>
<dbReference type="NCBIfam" id="TIGR00343">
    <property type="entry name" value="pyridoxal 5'-phosphate synthase lyase subunit PdxS"/>
    <property type="match status" value="1"/>
</dbReference>
<dbReference type="PANTHER" id="PTHR31829">
    <property type="entry name" value="PYRIDOXAL 5'-PHOSPHATE SYNTHASE SUBUNIT SNZ1-RELATED"/>
    <property type="match status" value="1"/>
</dbReference>
<dbReference type="PANTHER" id="PTHR31829:SF0">
    <property type="entry name" value="PYRIDOXAL 5'-PHOSPHATE SYNTHASE SUBUNIT SNZ1-RELATED"/>
    <property type="match status" value="1"/>
</dbReference>
<dbReference type="Pfam" id="PF01680">
    <property type="entry name" value="SOR_SNZ"/>
    <property type="match status" value="1"/>
</dbReference>
<dbReference type="PIRSF" id="PIRSF029271">
    <property type="entry name" value="Pdx1"/>
    <property type="match status" value="1"/>
</dbReference>
<dbReference type="SUPFAM" id="SSF51366">
    <property type="entry name" value="Ribulose-phoshate binding barrel"/>
    <property type="match status" value="1"/>
</dbReference>
<dbReference type="PROSITE" id="PS01235">
    <property type="entry name" value="PDXS_SNZ_1"/>
    <property type="match status" value="1"/>
</dbReference>
<dbReference type="PROSITE" id="PS51129">
    <property type="entry name" value="PDXS_SNZ_2"/>
    <property type="match status" value="1"/>
</dbReference>
<comment type="function">
    <text evidence="1">Catalyzes the formation of pyridoxal 5'-phosphate from ribose 5-phosphate (RBP), glyceraldehyde 3-phosphate (G3P) and ammonia. The ammonia is provided by the PdxT subunit. Can also use ribulose 5-phosphate and dihydroxyacetone phosphate as substrates, resulting from enzyme-catalyzed isomerization of RBP and G3P, respectively.</text>
</comment>
<comment type="catalytic activity">
    <reaction evidence="1">
        <text>aldehydo-D-ribose 5-phosphate + D-glyceraldehyde 3-phosphate + L-glutamine = pyridoxal 5'-phosphate + L-glutamate + phosphate + 3 H2O + H(+)</text>
        <dbReference type="Rhea" id="RHEA:31507"/>
        <dbReference type="ChEBI" id="CHEBI:15377"/>
        <dbReference type="ChEBI" id="CHEBI:15378"/>
        <dbReference type="ChEBI" id="CHEBI:29985"/>
        <dbReference type="ChEBI" id="CHEBI:43474"/>
        <dbReference type="ChEBI" id="CHEBI:58273"/>
        <dbReference type="ChEBI" id="CHEBI:58359"/>
        <dbReference type="ChEBI" id="CHEBI:59776"/>
        <dbReference type="ChEBI" id="CHEBI:597326"/>
        <dbReference type="EC" id="4.3.3.6"/>
    </reaction>
</comment>
<comment type="pathway">
    <text evidence="1">Cofactor biosynthesis; pyridoxal 5'-phosphate biosynthesis.</text>
</comment>
<comment type="subunit">
    <text evidence="1">In the presence of PdxT, forms a dodecamer of heterodimers.</text>
</comment>
<comment type="similarity">
    <text evidence="1">Belongs to the PdxS/SNZ family.</text>
</comment>
<comment type="sequence caution" evidence="2">
    <conflict type="erroneous initiation">
        <sequence resource="EMBL-CDS" id="AAP07120"/>
    </conflict>
</comment>
<accession>Q81JC6</accession>
<reference key="1">
    <citation type="journal article" date="2003" name="Nature">
        <title>Genome sequence of Bacillus cereus and comparative analysis with Bacillus anthracis.</title>
        <authorList>
            <person name="Ivanova N."/>
            <person name="Sorokin A."/>
            <person name="Anderson I."/>
            <person name="Galleron N."/>
            <person name="Candelon B."/>
            <person name="Kapatral V."/>
            <person name="Bhattacharyya A."/>
            <person name="Reznik G."/>
            <person name="Mikhailova N."/>
            <person name="Lapidus A."/>
            <person name="Chu L."/>
            <person name="Mazur M."/>
            <person name="Goltsman E."/>
            <person name="Larsen N."/>
            <person name="D'Souza M."/>
            <person name="Walunas T."/>
            <person name="Grechkin Y."/>
            <person name="Pusch G."/>
            <person name="Haselkorn R."/>
            <person name="Fonstein M."/>
            <person name="Ehrlich S.D."/>
            <person name="Overbeek R."/>
            <person name="Kyrpides N.C."/>
        </authorList>
    </citation>
    <scope>NUCLEOTIDE SEQUENCE [LARGE SCALE GENOMIC DNA]</scope>
    <source>
        <strain>ATCC 14579 / DSM 31 / CCUG 7414 / JCM 2152 / NBRC 15305 / NCIMB 9373 / NCTC 2599 / NRRL B-3711</strain>
    </source>
</reference>
<evidence type="ECO:0000255" key="1">
    <source>
        <dbReference type="HAMAP-Rule" id="MF_01824"/>
    </source>
</evidence>
<evidence type="ECO:0000305" key="2"/>
<gene>
    <name evidence="1" type="primary">pdxS</name>
    <name type="ordered locus">BC_0015</name>
</gene>
<name>PDXS_BACCR</name>